<reference key="1">
    <citation type="journal article" date="2006" name="Proc. Natl. Acad. Sci. U.S.A.">
        <title>Burkholderia xenovorans LB400 harbors a multi-replicon, 9.73-Mbp genome shaped for versatility.</title>
        <authorList>
            <person name="Chain P.S.G."/>
            <person name="Denef V.J."/>
            <person name="Konstantinidis K.T."/>
            <person name="Vergez L.M."/>
            <person name="Agullo L."/>
            <person name="Reyes V.L."/>
            <person name="Hauser L."/>
            <person name="Cordova M."/>
            <person name="Gomez L."/>
            <person name="Gonzalez M."/>
            <person name="Land M."/>
            <person name="Lao V."/>
            <person name="Larimer F."/>
            <person name="LiPuma J.J."/>
            <person name="Mahenthiralingam E."/>
            <person name="Malfatti S.A."/>
            <person name="Marx C.J."/>
            <person name="Parnell J.J."/>
            <person name="Ramette A."/>
            <person name="Richardson P."/>
            <person name="Seeger M."/>
            <person name="Smith D."/>
            <person name="Spilker T."/>
            <person name="Sul W.J."/>
            <person name="Tsoi T.V."/>
            <person name="Ulrich L.E."/>
            <person name="Zhulin I.B."/>
            <person name="Tiedje J.M."/>
        </authorList>
    </citation>
    <scope>NUCLEOTIDE SEQUENCE [LARGE SCALE GENOMIC DNA]</scope>
    <source>
        <strain>LB400</strain>
    </source>
</reference>
<keyword id="KW-0997">Cell inner membrane</keyword>
<keyword id="KW-1003">Cell membrane</keyword>
<keyword id="KW-0407">Ion channel</keyword>
<keyword id="KW-0406">Ion transport</keyword>
<keyword id="KW-0472">Membrane</keyword>
<keyword id="KW-0479">Metal-binding</keyword>
<keyword id="KW-1185">Reference proteome</keyword>
<keyword id="KW-0915">Sodium</keyword>
<keyword id="KW-0812">Transmembrane</keyword>
<keyword id="KW-1133">Transmembrane helix</keyword>
<keyword id="KW-0813">Transport</keyword>
<feature type="chain" id="PRO_0000252864" description="Fluoride-specific ion channel FluC">
    <location>
        <begin position="1"/>
        <end position="126"/>
    </location>
</feature>
<feature type="transmembrane region" description="Helical" evidence="1">
    <location>
        <begin position="4"/>
        <end position="24"/>
    </location>
</feature>
<feature type="transmembrane region" description="Helical" evidence="1">
    <location>
        <begin position="35"/>
        <end position="55"/>
    </location>
</feature>
<feature type="transmembrane region" description="Helical" evidence="1">
    <location>
        <begin position="68"/>
        <end position="88"/>
    </location>
</feature>
<feature type="transmembrane region" description="Helical" evidence="1">
    <location>
        <begin position="103"/>
        <end position="123"/>
    </location>
</feature>
<feature type="binding site" evidence="1">
    <location>
        <position position="75"/>
    </location>
    <ligand>
        <name>Na(+)</name>
        <dbReference type="ChEBI" id="CHEBI:29101"/>
        <note>structural</note>
    </ligand>
</feature>
<feature type="binding site" evidence="1">
    <location>
        <position position="78"/>
    </location>
    <ligand>
        <name>Na(+)</name>
        <dbReference type="ChEBI" id="CHEBI:29101"/>
        <note>structural</note>
    </ligand>
</feature>
<accession>Q140Y6</accession>
<comment type="function">
    <text evidence="1">Fluoride-specific ion channel. Important for reducing fluoride concentration in the cell, thus reducing its toxicity.</text>
</comment>
<comment type="catalytic activity">
    <reaction evidence="1">
        <text>fluoride(in) = fluoride(out)</text>
        <dbReference type="Rhea" id="RHEA:76159"/>
        <dbReference type="ChEBI" id="CHEBI:17051"/>
    </reaction>
    <physiologicalReaction direction="left-to-right" evidence="1">
        <dbReference type="Rhea" id="RHEA:76160"/>
    </physiologicalReaction>
</comment>
<comment type="activity regulation">
    <text evidence="1">Na(+) is not transported, but it plays an essential structural role and its presence is essential for fluoride channel function.</text>
</comment>
<comment type="subcellular location">
    <subcellularLocation>
        <location evidence="1">Cell inner membrane</location>
        <topology evidence="1">Multi-pass membrane protein</topology>
    </subcellularLocation>
</comment>
<comment type="similarity">
    <text evidence="1">Belongs to the fluoride channel Fluc/FEX (TC 1.A.43) family.</text>
</comment>
<comment type="sequence caution" evidence="2">
    <conflict type="erroneous initiation">
        <sequence resource="EMBL-CDS" id="ABE30103"/>
    </conflict>
</comment>
<sequence length="126" mass="13196">MYWSILAVGIGGALGSLFRWFLGIRLNGLFSGLPLGTFAANVIAGYVIGVAVAGFARAPQIAPEWRLFVITGLMGGLSTFSTFSAEVVQRLQDGRLGWAAGEIVIHVGASLVMTILGIATVSLLSR</sequence>
<proteinExistence type="inferred from homology"/>
<gene>
    <name evidence="1" type="primary">fluC</name>
    <name evidence="1" type="synonym">crcB</name>
    <name type="ordered locus">Bxeno_A1565</name>
    <name type="ORF">Bxe_A2870</name>
</gene>
<protein>
    <recommendedName>
        <fullName evidence="1">Fluoride-specific ion channel FluC</fullName>
    </recommendedName>
</protein>
<organism>
    <name type="scientific">Paraburkholderia xenovorans (strain LB400)</name>
    <dbReference type="NCBI Taxonomy" id="266265"/>
    <lineage>
        <taxon>Bacteria</taxon>
        <taxon>Pseudomonadati</taxon>
        <taxon>Pseudomonadota</taxon>
        <taxon>Betaproteobacteria</taxon>
        <taxon>Burkholderiales</taxon>
        <taxon>Burkholderiaceae</taxon>
        <taxon>Paraburkholderia</taxon>
    </lineage>
</organism>
<dbReference type="EMBL" id="CP000270">
    <property type="protein sequence ID" value="ABE30103.1"/>
    <property type="status" value="ALT_INIT"/>
    <property type="molecule type" value="Genomic_DNA"/>
</dbReference>
<dbReference type="RefSeq" id="WP_038456463.1">
    <property type="nucleotide sequence ID" value="NZ_CP008760.1"/>
</dbReference>
<dbReference type="SMR" id="Q140Y6"/>
<dbReference type="STRING" id="266265.Bxe_A2870"/>
<dbReference type="KEGG" id="bxb:DR64_551"/>
<dbReference type="KEGG" id="bxe:Bxe_A2870"/>
<dbReference type="PATRIC" id="fig|266265.5.peg.1622"/>
<dbReference type="eggNOG" id="COG0239">
    <property type="taxonomic scope" value="Bacteria"/>
</dbReference>
<dbReference type="OrthoDB" id="9806299at2"/>
<dbReference type="Proteomes" id="UP000001817">
    <property type="component" value="Chromosome 1"/>
</dbReference>
<dbReference type="GO" id="GO:0005886">
    <property type="term" value="C:plasma membrane"/>
    <property type="evidence" value="ECO:0007669"/>
    <property type="project" value="UniProtKB-SubCell"/>
</dbReference>
<dbReference type="GO" id="GO:0062054">
    <property type="term" value="F:fluoride channel activity"/>
    <property type="evidence" value="ECO:0007669"/>
    <property type="project" value="UniProtKB-UniRule"/>
</dbReference>
<dbReference type="GO" id="GO:0046872">
    <property type="term" value="F:metal ion binding"/>
    <property type="evidence" value="ECO:0007669"/>
    <property type="project" value="UniProtKB-KW"/>
</dbReference>
<dbReference type="GO" id="GO:0140114">
    <property type="term" value="P:cellular detoxification of fluoride"/>
    <property type="evidence" value="ECO:0007669"/>
    <property type="project" value="UniProtKB-UniRule"/>
</dbReference>
<dbReference type="HAMAP" id="MF_00454">
    <property type="entry name" value="FluC"/>
    <property type="match status" value="1"/>
</dbReference>
<dbReference type="InterPro" id="IPR003691">
    <property type="entry name" value="FluC"/>
</dbReference>
<dbReference type="NCBIfam" id="TIGR00494">
    <property type="entry name" value="crcB"/>
    <property type="match status" value="1"/>
</dbReference>
<dbReference type="NCBIfam" id="NF010792">
    <property type="entry name" value="PRK14196.1"/>
    <property type="match status" value="1"/>
</dbReference>
<dbReference type="PANTHER" id="PTHR28259">
    <property type="entry name" value="FLUORIDE EXPORT PROTEIN 1-RELATED"/>
    <property type="match status" value="1"/>
</dbReference>
<dbReference type="PANTHER" id="PTHR28259:SF1">
    <property type="entry name" value="FLUORIDE EXPORT PROTEIN 1-RELATED"/>
    <property type="match status" value="1"/>
</dbReference>
<dbReference type="Pfam" id="PF02537">
    <property type="entry name" value="CRCB"/>
    <property type="match status" value="1"/>
</dbReference>
<evidence type="ECO:0000255" key="1">
    <source>
        <dbReference type="HAMAP-Rule" id="MF_00454"/>
    </source>
</evidence>
<evidence type="ECO:0000305" key="2"/>
<name>FLUC_PARXL</name>